<evidence type="ECO:0000250" key="1"/>
<evidence type="ECO:0000305" key="2"/>
<proteinExistence type="inferred from homology"/>
<accession>O85171</accession>
<name>VAPD2_RIEAN</name>
<protein>
    <recommendedName>
        <fullName>Endoribonuclease VapD 2</fullName>
        <ecNumber>3.1.-.-</ecNumber>
    </recommendedName>
    <alternativeName>
        <fullName>Virulence-associated protein 2</fullName>
    </alternativeName>
</protein>
<dbReference type="EC" id="3.1.-.-"/>
<dbReference type="EMBL" id="AF048718">
    <property type="protein sequence ID" value="AAC27553.1"/>
    <property type="molecule type" value="Genomic_DNA"/>
</dbReference>
<dbReference type="RefSeq" id="NP_052295.1">
    <property type="nucleotide sequence ID" value="NC_002111.1"/>
</dbReference>
<dbReference type="RefSeq" id="WP_010891139.1">
    <property type="nucleotide sequence ID" value="NC_002111.1"/>
</dbReference>
<dbReference type="SMR" id="O85171"/>
<dbReference type="GO" id="GO:0004518">
    <property type="term" value="F:nuclease activity"/>
    <property type="evidence" value="ECO:0007669"/>
    <property type="project" value="UniProtKB-KW"/>
</dbReference>
<dbReference type="GO" id="GO:0003723">
    <property type="term" value="F:RNA binding"/>
    <property type="evidence" value="ECO:0007669"/>
    <property type="project" value="InterPro"/>
</dbReference>
<dbReference type="Gene3D" id="3.30.70.240">
    <property type="match status" value="1"/>
</dbReference>
<dbReference type="InterPro" id="IPR016368">
    <property type="entry name" value="VapD"/>
</dbReference>
<dbReference type="PIRSF" id="PIRSF002882">
    <property type="entry name" value="VapD"/>
    <property type="match status" value="1"/>
</dbReference>
<organism>
    <name type="scientific">Riemerella anatipestifer</name>
    <name type="common">Moraxella anatipestifer</name>
    <dbReference type="NCBI Taxonomy" id="34085"/>
    <lineage>
        <taxon>Bacteria</taxon>
        <taxon>Pseudomonadati</taxon>
        <taxon>Bacteroidota</taxon>
        <taxon>Flavobacteriia</taxon>
        <taxon>Flavobacteriales</taxon>
        <taxon>Weeksellaceae</taxon>
        <taxon>Riemerella</taxon>
    </lineage>
</organism>
<sequence length="94" mass="10842">MYAILFELDTNCLNDNYEGNTYHNSYKLVNDFMIENGFTWKQGSVYFGGANIDAVTCVLVVQKLSKKYPWFSTCVKDVRMLRIEENNDLLPAIS</sequence>
<feature type="chain" id="PRO_0000217276" description="Endoribonuclease VapD 2">
    <location>
        <begin position="1"/>
        <end position="94"/>
    </location>
</feature>
<reference key="1">
    <citation type="journal article" date="1998" name="Avian Pathol.">
        <title>Molecular characterization of a plasmid isolated from Riemerella anatipestifer.</title>
        <authorList>
            <person name="Chang C.-F."/>
            <person name="Hung P.-E."/>
            <person name="Chang Y.-F."/>
        </authorList>
    </citation>
    <scope>NUCLEOTIDE SEQUENCE [GENOMIC DNA]</scope>
    <source>
        <strain>10</strain>
    </source>
</reference>
<comment type="function">
    <text evidence="1">Cleaves ssRNA, mostly between U:A.</text>
</comment>
<comment type="subunit">
    <text evidence="1">Homodimer.</text>
</comment>
<comment type="similarity">
    <text evidence="2">Belongs to the VapD ribonuclease family.</text>
</comment>
<geneLocation type="plasmid">
    <name>pCFC1</name>
</geneLocation>
<keyword id="KW-0378">Hydrolase</keyword>
<keyword id="KW-0540">Nuclease</keyword>
<keyword id="KW-0614">Plasmid</keyword>
<keyword id="KW-0843">Virulence</keyword>